<evidence type="ECO:0000255" key="1">
    <source>
        <dbReference type="HAMAP-Rule" id="MF_01615"/>
    </source>
</evidence>
<gene>
    <name evidence="1" type="primary">pdxT</name>
    <name type="ordered locus">Sare_1778</name>
</gene>
<protein>
    <recommendedName>
        <fullName evidence="1">Pyridoxal 5'-phosphate synthase subunit PdxT</fullName>
        <ecNumber evidence="1">4.3.3.6</ecNumber>
    </recommendedName>
    <alternativeName>
        <fullName evidence="1">Pdx2</fullName>
    </alternativeName>
    <alternativeName>
        <fullName evidence="1">Pyridoxal 5'-phosphate synthase glutaminase subunit</fullName>
        <ecNumber evidence="1">3.5.1.2</ecNumber>
    </alternativeName>
</protein>
<comment type="function">
    <text evidence="1">Catalyzes the hydrolysis of glutamine to glutamate and ammonia as part of the biosynthesis of pyridoxal 5'-phosphate. The resulting ammonia molecule is channeled to the active site of PdxS.</text>
</comment>
<comment type="catalytic activity">
    <reaction evidence="1">
        <text>aldehydo-D-ribose 5-phosphate + D-glyceraldehyde 3-phosphate + L-glutamine = pyridoxal 5'-phosphate + L-glutamate + phosphate + 3 H2O + H(+)</text>
        <dbReference type="Rhea" id="RHEA:31507"/>
        <dbReference type="ChEBI" id="CHEBI:15377"/>
        <dbReference type="ChEBI" id="CHEBI:15378"/>
        <dbReference type="ChEBI" id="CHEBI:29985"/>
        <dbReference type="ChEBI" id="CHEBI:43474"/>
        <dbReference type="ChEBI" id="CHEBI:58273"/>
        <dbReference type="ChEBI" id="CHEBI:58359"/>
        <dbReference type="ChEBI" id="CHEBI:59776"/>
        <dbReference type="ChEBI" id="CHEBI:597326"/>
        <dbReference type="EC" id="4.3.3.6"/>
    </reaction>
</comment>
<comment type="catalytic activity">
    <reaction evidence="1">
        <text>L-glutamine + H2O = L-glutamate + NH4(+)</text>
        <dbReference type="Rhea" id="RHEA:15889"/>
        <dbReference type="ChEBI" id="CHEBI:15377"/>
        <dbReference type="ChEBI" id="CHEBI:28938"/>
        <dbReference type="ChEBI" id="CHEBI:29985"/>
        <dbReference type="ChEBI" id="CHEBI:58359"/>
        <dbReference type="EC" id="3.5.1.2"/>
    </reaction>
</comment>
<comment type="pathway">
    <text evidence="1">Cofactor biosynthesis; pyridoxal 5'-phosphate biosynthesis.</text>
</comment>
<comment type="subunit">
    <text evidence="1">In the presence of PdxS, forms a dodecamer of heterodimers. Only shows activity in the heterodimer.</text>
</comment>
<comment type="similarity">
    <text evidence="1">Belongs to the glutaminase PdxT/SNO family.</text>
</comment>
<organism>
    <name type="scientific">Salinispora arenicola (strain CNS-205)</name>
    <dbReference type="NCBI Taxonomy" id="391037"/>
    <lineage>
        <taxon>Bacteria</taxon>
        <taxon>Bacillati</taxon>
        <taxon>Actinomycetota</taxon>
        <taxon>Actinomycetes</taxon>
        <taxon>Micromonosporales</taxon>
        <taxon>Micromonosporaceae</taxon>
        <taxon>Salinispora</taxon>
    </lineage>
</organism>
<keyword id="KW-0315">Glutamine amidotransferase</keyword>
<keyword id="KW-0378">Hydrolase</keyword>
<keyword id="KW-0456">Lyase</keyword>
<keyword id="KW-0663">Pyridoxal phosphate</keyword>
<accession>A8LWZ5</accession>
<dbReference type="EC" id="4.3.3.6" evidence="1"/>
<dbReference type="EC" id="3.5.1.2" evidence="1"/>
<dbReference type="EMBL" id="CP000850">
    <property type="protein sequence ID" value="ABV97665.1"/>
    <property type="molecule type" value="Genomic_DNA"/>
</dbReference>
<dbReference type="SMR" id="A8LWZ5"/>
<dbReference type="STRING" id="391037.Sare_1778"/>
<dbReference type="MEROPS" id="C26.A32"/>
<dbReference type="KEGG" id="saq:Sare_1778"/>
<dbReference type="PATRIC" id="fig|391037.6.peg.1810"/>
<dbReference type="eggNOG" id="COG0311">
    <property type="taxonomic scope" value="Bacteria"/>
</dbReference>
<dbReference type="HOGENOM" id="CLU_069674_2_0_11"/>
<dbReference type="OrthoDB" id="9810320at2"/>
<dbReference type="UniPathway" id="UPA00245"/>
<dbReference type="GO" id="GO:0005829">
    <property type="term" value="C:cytosol"/>
    <property type="evidence" value="ECO:0007669"/>
    <property type="project" value="TreeGrafter"/>
</dbReference>
<dbReference type="GO" id="GO:1903600">
    <property type="term" value="C:glutaminase complex"/>
    <property type="evidence" value="ECO:0007669"/>
    <property type="project" value="TreeGrafter"/>
</dbReference>
<dbReference type="GO" id="GO:0004359">
    <property type="term" value="F:glutaminase activity"/>
    <property type="evidence" value="ECO:0007669"/>
    <property type="project" value="UniProtKB-UniRule"/>
</dbReference>
<dbReference type="GO" id="GO:0036381">
    <property type="term" value="F:pyridoxal 5'-phosphate synthase (glutamine hydrolysing) activity"/>
    <property type="evidence" value="ECO:0007669"/>
    <property type="project" value="UniProtKB-UniRule"/>
</dbReference>
<dbReference type="GO" id="GO:0006543">
    <property type="term" value="P:glutamine catabolic process"/>
    <property type="evidence" value="ECO:0007669"/>
    <property type="project" value="UniProtKB-UniRule"/>
</dbReference>
<dbReference type="GO" id="GO:0042823">
    <property type="term" value="P:pyridoxal phosphate biosynthetic process"/>
    <property type="evidence" value="ECO:0007669"/>
    <property type="project" value="UniProtKB-UniRule"/>
</dbReference>
<dbReference type="GO" id="GO:0008614">
    <property type="term" value="P:pyridoxine metabolic process"/>
    <property type="evidence" value="ECO:0007669"/>
    <property type="project" value="TreeGrafter"/>
</dbReference>
<dbReference type="CDD" id="cd01749">
    <property type="entry name" value="GATase1_PB"/>
    <property type="match status" value="1"/>
</dbReference>
<dbReference type="FunFam" id="3.40.50.880:FF:000010">
    <property type="entry name" value="uncharacterized protein LOC100176842 isoform X2"/>
    <property type="match status" value="1"/>
</dbReference>
<dbReference type="Gene3D" id="3.40.50.880">
    <property type="match status" value="1"/>
</dbReference>
<dbReference type="HAMAP" id="MF_01615">
    <property type="entry name" value="PdxT"/>
    <property type="match status" value="1"/>
</dbReference>
<dbReference type="InterPro" id="IPR029062">
    <property type="entry name" value="Class_I_gatase-like"/>
</dbReference>
<dbReference type="InterPro" id="IPR002161">
    <property type="entry name" value="PdxT/SNO"/>
</dbReference>
<dbReference type="InterPro" id="IPR021196">
    <property type="entry name" value="PdxT/SNO_CS"/>
</dbReference>
<dbReference type="NCBIfam" id="TIGR03800">
    <property type="entry name" value="PLP_synth_Pdx2"/>
    <property type="match status" value="1"/>
</dbReference>
<dbReference type="PANTHER" id="PTHR31559">
    <property type="entry name" value="PYRIDOXAL 5'-PHOSPHATE SYNTHASE SUBUNIT SNO"/>
    <property type="match status" value="1"/>
</dbReference>
<dbReference type="PANTHER" id="PTHR31559:SF0">
    <property type="entry name" value="PYRIDOXAL 5'-PHOSPHATE SYNTHASE SUBUNIT SNO1-RELATED"/>
    <property type="match status" value="1"/>
</dbReference>
<dbReference type="Pfam" id="PF01174">
    <property type="entry name" value="SNO"/>
    <property type="match status" value="1"/>
</dbReference>
<dbReference type="PIRSF" id="PIRSF005639">
    <property type="entry name" value="Glut_amidoT_SNO"/>
    <property type="match status" value="1"/>
</dbReference>
<dbReference type="SUPFAM" id="SSF52317">
    <property type="entry name" value="Class I glutamine amidotransferase-like"/>
    <property type="match status" value="1"/>
</dbReference>
<dbReference type="PROSITE" id="PS01236">
    <property type="entry name" value="PDXT_SNO_1"/>
    <property type="match status" value="1"/>
</dbReference>
<dbReference type="PROSITE" id="PS51130">
    <property type="entry name" value="PDXT_SNO_2"/>
    <property type="match status" value="1"/>
</dbReference>
<feature type="chain" id="PRO_1000088055" description="Pyridoxal 5'-phosphate synthase subunit PdxT">
    <location>
        <begin position="1"/>
        <end position="201"/>
    </location>
</feature>
<feature type="active site" description="Nucleophile" evidence="1">
    <location>
        <position position="81"/>
    </location>
</feature>
<feature type="active site" description="Charge relay system" evidence="1">
    <location>
        <position position="180"/>
    </location>
</feature>
<feature type="active site" description="Charge relay system" evidence="1">
    <location>
        <position position="182"/>
    </location>
</feature>
<feature type="binding site" evidence="1">
    <location>
        <begin position="49"/>
        <end position="51"/>
    </location>
    <ligand>
        <name>L-glutamine</name>
        <dbReference type="ChEBI" id="CHEBI:58359"/>
    </ligand>
</feature>
<feature type="binding site" evidence="1">
    <location>
        <position position="110"/>
    </location>
    <ligand>
        <name>L-glutamine</name>
        <dbReference type="ChEBI" id="CHEBI:58359"/>
    </ligand>
</feature>
<feature type="binding site" evidence="1">
    <location>
        <begin position="139"/>
        <end position="140"/>
    </location>
    <ligand>
        <name>L-glutamine</name>
        <dbReference type="ChEBI" id="CHEBI:58359"/>
    </ligand>
</feature>
<name>PDXT_SALAI</name>
<sequence>MTAPVIGVLALQGDVREHTAALAAAGADARPVRRPGELDLVDGLVIPGGESTTISRLADVFELREPIDKRIADGMPVYGSCAGMIMLASEVLDGRPDQRAFAGIEMTVRRNAFGRQVHSFEAPVSVAGIDGGPFHVLFIRAPWVERVGQGVEVLGTVTEGPAAGRIVAVRQGNLLATSFHPELTGDRRLHAYFADLVRAAV</sequence>
<proteinExistence type="inferred from homology"/>
<reference key="1">
    <citation type="submission" date="2007-10" db="EMBL/GenBank/DDBJ databases">
        <title>Complete sequence of Salinispora arenicola CNS-205.</title>
        <authorList>
            <consortium name="US DOE Joint Genome Institute"/>
            <person name="Copeland A."/>
            <person name="Lucas S."/>
            <person name="Lapidus A."/>
            <person name="Barry K."/>
            <person name="Glavina del Rio T."/>
            <person name="Dalin E."/>
            <person name="Tice H."/>
            <person name="Pitluck S."/>
            <person name="Foster B."/>
            <person name="Schmutz J."/>
            <person name="Larimer F."/>
            <person name="Land M."/>
            <person name="Hauser L."/>
            <person name="Kyrpides N."/>
            <person name="Ivanova N."/>
            <person name="Jensen P.R."/>
            <person name="Moore B.S."/>
            <person name="Penn K."/>
            <person name="Jenkins C."/>
            <person name="Udwary D."/>
            <person name="Xiang L."/>
            <person name="Gontang E."/>
            <person name="Richardson P."/>
        </authorList>
    </citation>
    <scope>NUCLEOTIDE SEQUENCE [LARGE SCALE GENOMIC DNA]</scope>
    <source>
        <strain>CNS-205</strain>
    </source>
</reference>